<organism>
    <name type="scientific">Salmonella typhi</name>
    <dbReference type="NCBI Taxonomy" id="90370"/>
    <lineage>
        <taxon>Bacteria</taxon>
        <taxon>Pseudomonadati</taxon>
        <taxon>Pseudomonadota</taxon>
        <taxon>Gammaproteobacteria</taxon>
        <taxon>Enterobacterales</taxon>
        <taxon>Enterobacteriaceae</taxon>
        <taxon>Salmonella</taxon>
    </lineage>
</organism>
<name>TATE_SALTI</name>
<reference key="1">
    <citation type="journal article" date="2001" name="Nature">
        <title>Complete genome sequence of a multiple drug resistant Salmonella enterica serovar Typhi CT18.</title>
        <authorList>
            <person name="Parkhill J."/>
            <person name="Dougan G."/>
            <person name="James K.D."/>
            <person name="Thomson N.R."/>
            <person name="Pickard D."/>
            <person name="Wain J."/>
            <person name="Churcher C.M."/>
            <person name="Mungall K.L."/>
            <person name="Bentley S.D."/>
            <person name="Holden M.T.G."/>
            <person name="Sebaihia M."/>
            <person name="Baker S."/>
            <person name="Basham D."/>
            <person name="Brooks K."/>
            <person name="Chillingworth T."/>
            <person name="Connerton P."/>
            <person name="Cronin A."/>
            <person name="Davis P."/>
            <person name="Davies R.M."/>
            <person name="Dowd L."/>
            <person name="White N."/>
            <person name="Farrar J."/>
            <person name="Feltwell T."/>
            <person name="Hamlin N."/>
            <person name="Haque A."/>
            <person name="Hien T.T."/>
            <person name="Holroyd S."/>
            <person name="Jagels K."/>
            <person name="Krogh A."/>
            <person name="Larsen T.S."/>
            <person name="Leather S."/>
            <person name="Moule S."/>
            <person name="O'Gaora P."/>
            <person name="Parry C."/>
            <person name="Quail M.A."/>
            <person name="Rutherford K.M."/>
            <person name="Simmonds M."/>
            <person name="Skelton J."/>
            <person name="Stevens K."/>
            <person name="Whitehead S."/>
            <person name="Barrell B.G."/>
        </authorList>
    </citation>
    <scope>NUCLEOTIDE SEQUENCE [LARGE SCALE GENOMIC DNA]</scope>
    <source>
        <strain>CT18</strain>
    </source>
</reference>
<reference key="2">
    <citation type="journal article" date="2003" name="J. Bacteriol.">
        <title>Comparative genomics of Salmonella enterica serovar Typhi strains Ty2 and CT18.</title>
        <authorList>
            <person name="Deng W."/>
            <person name="Liou S.-R."/>
            <person name="Plunkett G. III"/>
            <person name="Mayhew G.F."/>
            <person name="Rose D.J."/>
            <person name="Burland V."/>
            <person name="Kodoyianni V."/>
            <person name="Schwartz D.C."/>
            <person name="Blattner F.R."/>
        </authorList>
    </citation>
    <scope>NUCLEOTIDE SEQUENCE [LARGE SCALE GENOMIC DNA]</scope>
    <source>
        <strain>ATCC 700931 / Ty2</strain>
    </source>
</reference>
<proteinExistence type="inferred from homology"/>
<dbReference type="EMBL" id="AL513382">
    <property type="protein sequence ID" value="CAD05109.1"/>
    <property type="molecule type" value="Genomic_DNA"/>
</dbReference>
<dbReference type="EMBL" id="AE014613">
    <property type="protein sequence ID" value="AAO69838.1"/>
    <property type="molecule type" value="Genomic_DNA"/>
</dbReference>
<dbReference type="RefSeq" id="NP_455208.1">
    <property type="nucleotide sequence ID" value="NC_003198.1"/>
</dbReference>
<dbReference type="RefSeq" id="WP_000503938.1">
    <property type="nucleotide sequence ID" value="NZ_WSUR01000015.1"/>
</dbReference>
<dbReference type="SMR" id="P0A2H6"/>
<dbReference type="STRING" id="220341.gene:17584690"/>
<dbReference type="KEGG" id="stt:t2235"/>
<dbReference type="KEGG" id="sty:STY0682"/>
<dbReference type="PATRIC" id="fig|220341.7.peg.685"/>
<dbReference type="eggNOG" id="COG1826">
    <property type="taxonomic scope" value="Bacteria"/>
</dbReference>
<dbReference type="HOGENOM" id="CLU_086034_5_3_6"/>
<dbReference type="OMA" id="RDEDKPN"/>
<dbReference type="OrthoDB" id="7066617at2"/>
<dbReference type="Proteomes" id="UP000000541">
    <property type="component" value="Chromosome"/>
</dbReference>
<dbReference type="Proteomes" id="UP000002670">
    <property type="component" value="Chromosome"/>
</dbReference>
<dbReference type="GO" id="GO:0033281">
    <property type="term" value="C:TAT protein transport complex"/>
    <property type="evidence" value="ECO:0007669"/>
    <property type="project" value="UniProtKB-UniRule"/>
</dbReference>
<dbReference type="GO" id="GO:0008320">
    <property type="term" value="F:protein transmembrane transporter activity"/>
    <property type="evidence" value="ECO:0007669"/>
    <property type="project" value="UniProtKB-UniRule"/>
</dbReference>
<dbReference type="GO" id="GO:0043953">
    <property type="term" value="P:protein transport by the Tat complex"/>
    <property type="evidence" value="ECO:0007669"/>
    <property type="project" value="UniProtKB-UniRule"/>
</dbReference>
<dbReference type="FunFam" id="1.20.5.3310:FF:000001">
    <property type="entry name" value="Probable Sec-independent protein translocase protein TatE"/>
    <property type="match status" value="1"/>
</dbReference>
<dbReference type="Gene3D" id="1.20.5.3310">
    <property type="match status" value="1"/>
</dbReference>
<dbReference type="HAMAP" id="MF_00236">
    <property type="entry name" value="TatA_E"/>
    <property type="match status" value="1"/>
</dbReference>
<dbReference type="HAMAP" id="MF_00903">
    <property type="entry name" value="TatE"/>
    <property type="match status" value="1"/>
</dbReference>
<dbReference type="InterPro" id="IPR003369">
    <property type="entry name" value="TatA/B/E"/>
</dbReference>
<dbReference type="InterPro" id="IPR006312">
    <property type="entry name" value="TatA/E"/>
</dbReference>
<dbReference type="InterPro" id="IPR024905">
    <property type="entry name" value="TatE"/>
</dbReference>
<dbReference type="NCBIfam" id="NF002448">
    <property type="entry name" value="PRK01614.1"/>
    <property type="match status" value="1"/>
</dbReference>
<dbReference type="NCBIfam" id="NF002960">
    <property type="entry name" value="PRK03625.1"/>
    <property type="match status" value="1"/>
</dbReference>
<dbReference type="NCBIfam" id="TIGR01411">
    <property type="entry name" value="tatAE"/>
    <property type="match status" value="1"/>
</dbReference>
<dbReference type="PANTHER" id="PTHR42982">
    <property type="entry name" value="SEC-INDEPENDENT PROTEIN TRANSLOCASE PROTEIN TATA"/>
    <property type="match status" value="1"/>
</dbReference>
<dbReference type="PANTHER" id="PTHR42982:SF5">
    <property type="entry name" value="SEC-INDEPENDENT PROTEIN TRANSLOCASE PROTEIN TATE"/>
    <property type="match status" value="1"/>
</dbReference>
<dbReference type="Pfam" id="PF02416">
    <property type="entry name" value="TatA_B_E"/>
    <property type="match status" value="1"/>
</dbReference>
<protein>
    <recommendedName>
        <fullName evidence="1">Probable Sec-independent protein translocase protein TatE</fullName>
    </recommendedName>
</protein>
<sequence>MGEISITKLLVVAALVVLLFGTKKLRTLGGDLGTAIKGFKKAMNDEDAGVKKDVDGSVQAEKLSHKE</sequence>
<keyword id="KW-0997">Cell inner membrane</keyword>
<keyword id="KW-1003">Cell membrane</keyword>
<keyword id="KW-0472">Membrane</keyword>
<keyword id="KW-0653">Protein transport</keyword>
<keyword id="KW-0811">Translocation</keyword>
<keyword id="KW-0812">Transmembrane</keyword>
<keyword id="KW-1133">Transmembrane helix</keyword>
<keyword id="KW-0813">Transport</keyword>
<comment type="function">
    <text evidence="1">Part of the twin-arginine translocation (Tat) system that transports large folded proteins containing a characteristic twin-arginine motif in their signal peptide across membranes. TatE shares overlapping functions with TatA.</text>
</comment>
<comment type="subcellular location">
    <subcellularLocation>
        <location evidence="1">Cell inner membrane</location>
        <topology evidence="1">Single-pass membrane protein</topology>
    </subcellularLocation>
</comment>
<comment type="similarity">
    <text evidence="1">Belongs to the TatA/E family. TatE subfamily.</text>
</comment>
<gene>
    <name evidence="1" type="primary">tatE</name>
    <name type="ordered locus">STY0682</name>
    <name type="ordered locus">t2235</name>
</gene>
<evidence type="ECO:0000255" key="1">
    <source>
        <dbReference type="HAMAP-Rule" id="MF_00903"/>
    </source>
</evidence>
<accession>P0A2H6</accession>
<accession>P57050</accession>
<feature type="chain" id="PRO_0000097976" description="Probable Sec-independent protein translocase protein TatE">
    <location>
        <begin position="1"/>
        <end position="67"/>
    </location>
</feature>
<feature type="transmembrane region" description="Helical" evidence="1">
    <location>
        <begin position="4"/>
        <end position="21"/>
    </location>
</feature>